<evidence type="ECO:0000250" key="1"/>
<evidence type="ECO:0000255" key="2">
    <source>
        <dbReference type="PROSITE-ProRule" id="PRU10070"/>
    </source>
</evidence>
<evidence type="ECO:0000269" key="3">
    <source>
    </source>
</evidence>
<evidence type="ECO:0000269" key="4">
    <source>
    </source>
</evidence>
<evidence type="ECO:0000305" key="5"/>
<evidence type="ECO:0007829" key="6">
    <source>
        <dbReference type="PDB" id="7C6C"/>
    </source>
</evidence>
<comment type="function">
    <text evidence="1">Aids in the defense against invading fungal pathogens by degrading their cell wall chitosan.</text>
</comment>
<comment type="catalytic activity">
    <reaction>
        <text>Endohydrolysis of beta-(1-&gt;4)-linkages between D-glucosamine residues in a partly acetylated chitosan.</text>
        <dbReference type="EC" id="3.2.1.132"/>
    </reaction>
</comment>
<comment type="subcellular location">
    <subcellularLocation>
        <location evidence="3 4">Secreted</location>
    </subcellularLocation>
</comment>
<comment type="similarity">
    <text evidence="5">Belongs to the glycosyl hydrolase 46 family.</text>
</comment>
<dbReference type="EC" id="3.2.1.132"/>
<dbReference type="EMBL" id="X92868">
    <property type="protein sequence ID" value="CAA63455.1"/>
    <property type="molecule type" value="Genomic_DNA"/>
</dbReference>
<dbReference type="EMBL" id="U93875">
    <property type="protein sequence ID" value="AAB80882.1"/>
    <property type="molecule type" value="Genomic_DNA"/>
</dbReference>
<dbReference type="EMBL" id="AL009126">
    <property type="protein sequence ID" value="CAB14630.1"/>
    <property type="molecule type" value="Genomic_DNA"/>
</dbReference>
<dbReference type="PIR" id="C69608">
    <property type="entry name" value="C69608"/>
</dbReference>
<dbReference type="RefSeq" id="NP_390566.1">
    <property type="nucleotide sequence ID" value="NC_000964.3"/>
</dbReference>
<dbReference type="RefSeq" id="WP_003229851.1">
    <property type="nucleotide sequence ID" value="NZ_OZ025638.1"/>
</dbReference>
<dbReference type="PDB" id="7C6C">
    <property type="method" value="X-ray"/>
    <property type="resolution" value="1.26 A"/>
    <property type="chains" value="A=36-277"/>
</dbReference>
<dbReference type="PDB" id="7C6D">
    <property type="method" value="X-ray"/>
    <property type="resolution" value="1.45 A"/>
    <property type="chains" value="A=36-277"/>
</dbReference>
<dbReference type="PDBsum" id="7C6C"/>
<dbReference type="PDBsum" id="7C6D"/>
<dbReference type="SMR" id="O07921"/>
<dbReference type="FunCoup" id="O07921">
    <property type="interactions" value="60"/>
</dbReference>
<dbReference type="STRING" id="224308.BSU26890"/>
<dbReference type="CAZy" id="GH46">
    <property type="family name" value="Glycoside Hydrolase Family 46"/>
</dbReference>
<dbReference type="PaxDb" id="224308-BSU26890"/>
<dbReference type="EnsemblBacteria" id="CAB14630">
    <property type="protein sequence ID" value="CAB14630"/>
    <property type="gene ID" value="BSU_26890"/>
</dbReference>
<dbReference type="GeneID" id="936802"/>
<dbReference type="KEGG" id="bsu:BSU26890"/>
<dbReference type="PATRIC" id="fig|224308.179.peg.2921"/>
<dbReference type="eggNOG" id="COG3409">
    <property type="taxonomic scope" value="Bacteria"/>
</dbReference>
<dbReference type="InParanoid" id="O07921"/>
<dbReference type="OrthoDB" id="1551268at2"/>
<dbReference type="PhylomeDB" id="O07921"/>
<dbReference type="BioCyc" id="BSUB:BSU26890-MONOMER"/>
<dbReference type="BioCyc" id="MetaCyc:BSU26890-MONOMER"/>
<dbReference type="Proteomes" id="UP000001570">
    <property type="component" value="Chromosome"/>
</dbReference>
<dbReference type="GO" id="GO:0005576">
    <property type="term" value="C:extracellular region"/>
    <property type="evidence" value="ECO:0007669"/>
    <property type="project" value="UniProtKB-SubCell"/>
</dbReference>
<dbReference type="GO" id="GO:0016977">
    <property type="term" value="F:chitosanase activity"/>
    <property type="evidence" value="ECO:0000314"/>
    <property type="project" value="CACAO"/>
</dbReference>
<dbReference type="GO" id="GO:0005975">
    <property type="term" value="P:carbohydrate metabolic process"/>
    <property type="evidence" value="ECO:0007669"/>
    <property type="project" value="InterPro"/>
</dbReference>
<dbReference type="CDD" id="cd00978">
    <property type="entry name" value="chitosanase_GH46"/>
    <property type="match status" value="1"/>
</dbReference>
<dbReference type="FunFam" id="3.30.386.10:FF:000001">
    <property type="entry name" value="Chitosanase"/>
    <property type="match status" value="1"/>
</dbReference>
<dbReference type="Gene3D" id="1.20.141.10">
    <property type="entry name" value="Chitosanase, subunit A, domain 1"/>
    <property type="match status" value="1"/>
</dbReference>
<dbReference type="Gene3D" id="3.30.386.10">
    <property type="entry name" value="Chitosanase, subunit A, domain 2"/>
    <property type="match status" value="1"/>
</dbReference>
<dbReference type="InterPro" id="IPR000400">
    <property type="entry name" value="Glyco_hydro_46"/>
</dbReference>
<dbReference type="InterPro" id="IPR023099">
    <property type="entry name" value="Glyco_hydro_46_N"/>
</dbReference>
<dbReference type="InterPro" id="IPR023346">
    <property type="entry name" value="Lysozyme-like_dom_sf"/>
</dbReference>
<dbReference type="Pfam" id="PF01374">
    <property type="entry name" value="Glyco_hydro_46"/>
    <property type="match status" value="1"/>
</dbReference>
<dbReference type="PIRSF" id="PIRSF036551">
    <property type="entry name" value="Chitosanase"/>
    <property type="match status" value="1"/>
</dbReference>
<dbReference type="SUPFAM" id="SSF53955">
    <property type="entry name" value="Lysozyme-like"/>
    <property type="match status" value="1"/>
</dbReference>
<dbReference type="PROSITE" id="PS60000">
    <property type="entry name" value="CHITOSANASE_46_80"/>
    <property type="match status" value="1"/>
</dbReference>
<name>CHIS_BACSU</name>
<accession>O07921</accession>
<proteinExistence type="evidence at protein level"/>
<gene>
    <name type="primary">csn</name>
    <name type="ordered locus">BSU26890</name>
</gene>
<reference key="1">
    <citation type="journal article" date="1997" name="Microbiology">
        <title>A 23911 bp region of the Bacillus subtilis genome comprising genes located upstream and downstream of the lev operon.</title>
        <authorList>
            <person name="Parro V."/>
            <person name="San Roman M."/>
            <person name="Galindo I."/>
            <person name="Purnelle B."/>
            <person name="Bolotin A."/>
            <person name="Sorokin A."/>
            <person name="Mellado R.P."/>
        </authorList>
    </citation>
    <scope>NUCLEOTIDE SEQUENCE [GENOMIC DNA]</scope>
    <source>
        <strain>168</strain>
    </source>
</reference>
<reference key="2">
    <citation type="journal article" date="1997" name="Microbiology">
        <title>Sequence of the Bacillus subtilis genome region in the vicinity of the lev operon reveals two new extracytoplasmic function RNA polymerase sigma factors SigV and SigZ.</title>
        <authorList>
            <person name="Sorokin A."/>
            <person name="Bolotin A."/>
            <person name="Purnelle B."/>
            <person name="Hilbert H."/>
            <person name="Lauber J."/>
            <person name="Duesterhoeft A."/>
            <person name="Ehrlich S.D."/>
        </authorList>
    </citation>
    <scope>NUCLEOTIDE SEQUENCE [GENOMIC DNA]</scope>
    <source>
        <strain>168</strain>
    </source>
</reference>
<reference key="3">
    <citation type="journal article" date="1997" name="Nature">
        <title>The complete genome sequence of the Gram-positive bacterium Bacillus subtilis.</title>
        <authorList>
            <person name="Kunst F."/>
            <person name="Ogasawara N."/>
            <person name="Moszer I."/>
            <person name="Albertini A.M."/>
            <person name="Alloni G."/>
            <person name="Azevedo V."/>
            <person name="Bertero M.G."/>
            <person name="Bessieres P."/>
            <person name="Bolotin A."/>
            <person name="Borchert S."/>
            <person name="Borriss R."/>
            <person name="Boursier L."/>
            <person name="Brans A."/>
            <person name="Braun M."/>
            <person name="Brignell S.C."/>
            <person name="Bron S."/>
            <person name="Brouillet S."/>
            <person name="Bruschi C.V."/>
            <person name="Caldwell B."/>
            <person name="Capuano V."/>
            <person name="Carter N.M."/>
            <person name="Choi S.-K."/>
            <person name="Codani J.-J."/>
            <person name="Connerton I.F."/>
            <person name="Cummings N.J."/>
            <person name="Daniel R.A."/>
            <person name="Denizot F."/>
            <person name="Devine K.M."/>
            <person name="Duesterhoeft A."/>
            <person name="Ehrlich S.D."/>
            <person name="Emmerson P.T."/>
            <person name="Entian K.-D."/>
            <person name="Errington J."/>
            <person name="Fabret C."/>
            <person name="Ferrari E."/>
            <person name="Foulger D."/>
            <person name="Fritz C."/>
            <person name="Fujita M."/>
            <person name="Fujita Y."/>
            <person name="Fuma S."/>
            <person name="Galizzi A."/>
            <person name="Galleron N."/>
            <person name="Ghim S.-Y."/>
            <person name="Glaser P."/>
            <person name="Goffeau A."/>
            <person name="Golightly E.J."/>
            <person name="Grandi G."/>
            <person name="Guiseppi G."/>
            <person name="Guy B.J."/>
            <person name="Haga K."/>
            <person name="Haiech J."/>
            <person name="Harwood C.R."/>
            <person name="Henaut A."/>
            <person name="Hilbert H."/>
            <person name="Holsappel S."/>
            <person name="Hosono S."/>
            <person name="Hullo M.-F."/>
            <person name="Itaya M."/>
            <person name="Jones L.-M."/>
            <person name="Joris B."/>
            <person name="Karamata D."/>
            <person name="Kasahara Y."/>
            <person name="Klaerr-Blanchard M."/>
            <person name="Klein C."/>
            <person name="Kobayashi Y."/>
            <person name="Koetter P."/>
            <person name="Koningstein G."/>
            <person name="Krogh S."/>
            <person name="Kumano M."/>
            <person name="Kurita K."/>
            <person name="Lapidus A."/>
            <person name="Lardinois S."/>
            <person name="Lauber J."/>
            <person name="Lazarevic V."/>
            <person name="Lee S.-M."/>
            <person name="Levine A."/>
            <person name="Liu H."/>
            <person name="Masuda S."/>
            <person name="Mauel C."/>
            <person name="Medigue C."/>
            <person name="Medina N."/>
            <person name="Mellado R.P."/>
            <person name="Mizuno M."/>
            <person name="Moestl D."/>
            <person name="Nakai S."/>
            <person name="Noback M."/>
            <person name="Noone D."/>
            <person name="O'Reilly M."/>
            <person name="Ogawa K."/>
            <person name="Ogiwara A."/>
            <person name="Oudega B."/>
            <person name="Park S.-H."/>
            <person name="Parro V."/>
            <person name="Pohl T.M."/>
            <person name="Portetelle D."/>
            <person name="Porwollik S."/>
            <person name="Prescott A.M."/>
            <person name="Presecan E."/>
            <person name="Pujic P."/>
            <person name="Purnelle B."/>
            <person name="Rapoport G."/>
            <person name="Rey M."/>
            <person name="Reynolds S."/>
            <person name="Rieger M."/>
            <person name="Rivolta C."/>
            <person name="Rocha E."/>
            <person name="Roche B."/>
            <person name="Rose M."/>
            <person name="Sadaie Y."/>
            <person name="Sato T."/>
            <person name="Scanlan E."/>
            <person name="Schleich S."/>
            <person name="Schroeter R."/>
            <person name="Scoffone F."/>
            <person name="Sekiguchi J."/>
            <person name="Sekowska A."/>
            <person name="Seror S.J."/>
            <person name="Serror P."/>
            <person name="Shin B.-S."/>
            <person name="Soldo B."/>
            <person name="Sorokin A."/>
            <person name="Tacconi E."/>
            <person name="Takagi T."/>
            <person name="Takahashi H."/>
            <person name="Takemaru K."/>
            <person name="Takeuchi M."/>
            <person name="Tamakoshi A."/>
            <person name="Tanaka T."/>
            <person name="Terpstra P."/>
            <person name="Tognoni A."/>
            <person name="Tosato V."/>
            <person name="Uchiyama S."/>
            <person name="Vandenbol M."/>
            <person name="Vannier F."/>
            <person name="Vassarotti A."/>
            <person name="Viari A."/>
            <person name="Wambutt R."/>
            <person name="Wedler E."/>
            <person name="Wedler H."/>
            <person name="Weitzenegger T."/>
            <person name="Winters P."/>
            <person name="Wipat A."/>
            <person name="Yamamoto H."/>
            <person name="Yamane K."/>
            <person name="Yasumoto K."/>
            <person name="Yata K."/>
            <person name="Yoshida K."/>
            <person name="Yoshikawa H.-F."/>
            <person name="Zumstein E."/>
            <person name="Yoshikawa H."/>
            <person name="Danchin A."/>
        </authorList>
    </citation>
    <scope>NUCLEOTIDE SEQUENCE [LARGE SCALE GENOMIC DNA]</scope>
    <source>
        <strain>168</strain>
    </source>
</reference>
<reference key="4">
    <citation type="journal article" date="2000" name="Microbiology">
        <title>Proteome analysis of Bacillus subtilis extracellular proteins: a two-dimensional protein electrophoretic study.</title>
        <authorList>
            <person name="Hirose I."/>
            <person name="Sano K."/>
            <person name="Shioda I."/>
            <person name="Kumano M."/>
            <person name="Nakamura K."/>
            <person name="Yamane K."/>
        </authorList>
    </citation>
    <scope>PROTEIN SEQUENCE OF 36-45</scope>
    <scope>SUBCELLULAR LOCATION</scope>
    <source>
        <strain>168</strain>
    </source>
</reference>
<reference key="5">
    <citation type="journal article" date="2011" name="J. Bacteriol.">
        <title>Nonclassical protein secretion by Bacillus subtilis in the stationary phase is not due to cell lysis.</title>
        <authorList>
            <person name="Yang C.K."/>
            <person name="Ewis H.E."/>
            <person name="Zhang X."/>
            <person name="Lu C.D."/>
            <person name="Hu H.J."/>
            <person name="Pan Y."/>
            <person name="Abdelal A.T."/>
            <person name="Tai P.C."/>
        </authorList>
    </citation>
    <scope>PROTEIN SEQUENCE OF N-TERMINUS</scope>
    <scope>SUBCELLULAR LOCATION</scope>
    <source>
        <strain>168 / WB600BHM</strain>
    </source>
</reference>
<organism>
    <name type="scientific">Bacillus subtilis (strain 168)</name>
    <dbReference type="NCBI Taxonomy" id="224308"/>
    <lineage>
        <taxon>Bacteria</taxon>
        <taxon>Bacillati</taxon>
        <taxon>Bacillota</taxon>
        <taxon>Bacilli</taxon>
        <taxon>Bacillales</taxon>
        <taxon>Bacillaceae</taxon>
        <taxon>Bacillus</taxon>
    </lineage>
</organism>
<protein>
    <recommendedName>
        <fullName>Chitosanase</fullName>
        <ecNumber>3.2.1.132</ecNumber>
    </recommendedName>
</protein>
<sequence>MKISMQKADFWKKAAISLLVFTMFFTLMMSETVFAAGLNKDQKRRAEQLTSIFENGTTEIQYGYVERLDDGRGYTCGRAGFTTATGDALEVVEVYTKAVPNNKLKKYLPELRRLAKEESDDTSNLKGFASAWKSLANDKEFRAAQDKVNDHLYYQPAMKRSDNAGLKTALARAVMYDTVIQHGDGDDPDSFYALIKRTNKKAGGSPKDGIDEKKWLNKFLDVRYDDLMNPANHDTRDEWRESVARVDVLRSIAKENNYNLNGPIHVRSNEYGNFVIK</sequence>
<keyword id="KW-0002">3D-structure</keyword>
<keyword id="KW-0903">Direct protein sequencing</keyword>
<keyword id="KW-0326">Glycosidase</keyword>
<keyword id="KW-0378">Hydrolase</keyword>
<keyword id="KW-1185">Reference proteome</keyword>
<keyword id="KW-0964">Secreted</keyword>
<keyword id="KW-0732">Signal</keyword>
<feature type="signal peptide" evidence="3">
    <location>
        <begin position="1"/>
        <end position="35"/>
    </location>
</feature>
<feature type="chain" id="PRO_0000012207" description="Chitosanase">
    <location>
        <begin position="36"/>
        <end position="277"/>
    </location>
</feature>
<feature type="active site" description="Proton donor" evidence="2">
    <location>
        <position position="54"/>
    </location>
</feature>
<feature type="active site" description="Nucleophile" evidence="1">
    <location>
        <position position="70"/>
    </location>
</feature>
<feature type="helix" evidence="6">
    <location>
        <begin position="40"/>
        <end position="55"/>
    </location>
</feature>
<feature type="strand" evidence="6">
    <location>
        <begin position="56"/>
        <end position="59"/>
    </location>
</feature>
<feature type="strand" evidence="6">
    <location>
        <begin position="65"/>
        <end position="67"/>
    </location>
</feature>
<feature type="strand" evidence="6">
    <location>
        <begin position="69"/>
        <end position="76"/>
    </location>
</feature>
<feature type="turn" evidence="6">
    <location>
        <begin position="77"/>
        <end position="80"/>
    </location>
</feature>
<feature type="turn" evidence="6">
    <location>
        <begin position="83"/>
        <end position="85"/>
    </location>
</feature>
<feature type="helix" evidence="6">
    <location>
        <begin position="87"/>
        <end position="98"/>
    </location>
</feature>
<feature type="helix" evidence="6">
    <location>
        <begin position="105"/>
        <end position="107"/>
    </location>
</feature>
<feature type="helix" evidence="6">
    <location>
        <begin position="108"/>
        <end position="117"/>
    </location>
</feature>
<feature type="helix" evidence="6">
    <location>
        <begin position="128"/>
        <end position="134"/>
    </location>
</feature>
<feature type="turn" evidence="6">
    <location>
        <begin position="135"/>
        <end position="137"/>
    </location>
</feature>
<feature type="helix" evidence="6">
    <location>
        <begin position="139"/>
        <end position="152"/>
    </location>
</feature>
<feature type="helix" evidence="6">
    <location>
        <begin position="154"/>
        <end position="163"/>
    </location>
</feature>
<feature type="helix" evidence="6">
    <location>
        <begin position="169"/>
        <end position="182"/>
    </location>
</feature>
<feature type="strand" evidence="6">
    <location>
        <begin position="184"/>
        <end position="187"/>
    </location>
</feature>
<feature type="helix" evidence="6">
    <location>
        <begin position="191"/>
        <end position="202"/>
    </location>
</feature>
<feature type="helix" evidence="6">
    <location>
        <begin position="206"/>
        <end position="208"/>
    </location>
</feature>
<feature type="helix" evidence="6">
    <location>
        <begin position="212"/>
        <end position="228"/>
    </location>
</feature>
<feature type="helix" evidence="6">
    <location>
        <begin position="233"/>
        <end position="235"/>
    </location>
</feature>
<feature type="helix" evidence="6">
    <location>
        <begin position="236"/>
        <end position="240"/>
    </location>
</feature>
<feature type="helix" evidence="6">
    <location>
        <begin position="241"/>
        <end position="243"/>
    </location>
</feature>
<feature type="helix" evidence="6">
    <location>
        <begin position="244"/>
        <end position="254"/>
    </location>
</feature>
<feature type="strand" evidence="6">
    <location>
        <begin position="264"/>
        <end position="268"/>
    </location>
</feature>
<feature type="turn" evidence="6">
    <location>
        <begin position="269"/>
        <end position="271"/>
    </location>
</feature>
<feature type="strand" evidence="6">
    <location>
        <begin position="272"/>
        <end position="276"/>
    </location>
</feature>